<feature type="signal peptide" evidence="3">
    <location>
        <begin position="1"/>
        <end position="24"/>
    </location>
</feature>
<feature type="chain" id="PRO_0000416440" description="Envelope glycoprotein B" evidence="3">
    <location>
        <begin position="25"/>
        <end position="907"/>
    </location>
</feature>
<feature type="topological domain" description="Virion surface" evidence="3">
    <location>
        <begin position="25"/>
        <end position="751"/>
    </location>
</feature>
<feature type="transmembrane region" description="Helical" evidence="3">
    <location>
        <begin position="752"/>
        <end position="772"/>
    </location>
</feature>
<feature type="topological domain" description="Intravirion" evidence="3">
    <location>
        <begin position="773"/>
        <end position="907"/>
    </location>
</feature>
<feature type="region of interest" description="Disordered" evidence="4">
    <location>
        <begin position="29"/>
        <end position="62"/>
    </location>
</feature>
<feature type="region of interest" description="Involved in fusion and/or binding to host membrane" evidence="3">
    <location>
        <begin position="152"/>
        <end position="158"/>
    </location>
</feature>
<feature type="region of interest" description="Involved in fusion and/or binding to host membrane" evidence="3">
    <location>
        <begin position="237"/>
        <end position="244"/>
    </location>
</feature>
<feature type="region of interest" description="Hydrophobic membrane proximal region" evidence="3">
    <location>
        <begin position="697"/>
        <end position="749"/>
    </location>
</feature>
<feature type="region of interest" description="Disordered" evidence="4">
    <location>
        <begin position="798"/>
        <end position="838"/>
    </location>
</feature>
<feature type="region of interest" description="Disordered" evidence="4">
    <location>
        <begin position="857"/>
        <end position="907"/>
    </location>
</feature>
<feature type="short sequence motif" description="Internalization motif" evidence="3">
    <location>
        <begin position="895"/>
        <end position="898"/>
    </location>
</feature>
<feature type="compositionally biased region" description="Low complexity" evidence="4">
    <location>
        <begin position="41"/>
        <end position="62"/>
    </location>
</feature>
<feature type="compositionally biased region" description="Polar residues" evidence="4">
    <location>
        <begin position="798"/>
        <end position="810"/>
    </location>
</feature>
<feature type="compositionally biased region" description="Polar residues" evidence="4">
    <location>
        <begin position="860"/>
        <end position="877"/>
    </location>
</feature>
<feature type="compositionally biased region" description="Basic and acidic residues" evidence="4">
    <location>
        <begin position="878"/>
        <end position="887"/>
    </location>
</feature>
<feature type="site" description="Cleavage; by host furin" evidence="2">
    <location>
        <begin position="460"/>
        <end position="461"/>
    </location>
</feature>
<feature type="glycosylation site" description="N-linked (GlcNAc...) asparagine; by host" evidence="3">
    <location>
        <position position="68"/>
    </location>
</feature>
<feature type="glycosylation site" description="N-linked (GlcNAc...) asparagine; by host" evidence="3">
    <location>
        <position position="73"/>
    </location>
</feature>
<feature type="glycosylation site" description="N-linked (GlcNAc...) asparagine; by host" evidence="3">
    <location>
        <position position="85"/>
    </location>
</feature>
<feature type="glycosylation site" description="N-linked (GlcNAc...) asparagine; by host" evidence="3">
    <location>
        <position position="208"/>
    </location>
</feature>
<feature type="glycosylation site" description="N-linked (GlcNAc...) asparagine; by host" evidence="3">
    <location>
        <position position="281"/>
    </location>
</feature>
<feature type="glycosylation site" description="N-linked (GlcNAc...) asparagine; by host" evidence="3">
    <location>
        <position position="286"/>
    </location>
</feature>
<feature type="glycosylation site" description="N-linked (GlcNAc...) asparagine; by host" evidence="3">
    <location>
        <position position="302"/>
    </location>
</feature>
<feature type="glycosylation site" description="N-linked (GlcNAc...) asparagine; by host" evidence="3">
    <location>
        <position position="341"/>
    </location>
</feature>
<feature type="glycosylation site" description="N-linked (GlcNAc...) asparagine; by host" evidence="3">
    <location>
        <position position="383"/>
    </location>
</feature>
<feature type="glycosylation site" description="N-linked (GlcNAc...) asparagine; by host" evidence="3">
    <location>
        <position position="405"/>
    </location>
</feature>
<feature type="glycosylation site" description="N-linked (GlcNAc...) asparagine; by host" evidence="3">
    <location>
        <position position="409"/>
    </location>
</feature>
<feature type="glycosylation site" description="N-linked (GlcNAc...) asparagine; by host" evidence="3">
    <location>
        <position position="417"/>
    </location>
</feature>
<feature type="glycosylation site" description="N-linked (GlcNAc...) asparagine; by host" evidence="3">
    <location>
        <position position="447"/>
    </location>
</feature>
<feature type="glycosylation site" description="N-linked (GlcNAc...) asparagine; by host" evidence="3">
    <location>
        <position position="452"/>
    </location>
</feature>
<feature type="glycosylation site" description="N-linked (GlcNAc...) asparagine; by host" evidence="3">
    <location>
        <position position="456"/>
    </location>
</feature>
<feature type="glycosylation site" description="N-linked (GlcNAc...) asparagine; by host" evidence="3">
    <location>
        <position position="466"/>
    </location>
</feature>
<feature type="glycosylation site" description="N-linked (GlcNAc...) asparagine; by host" evidence="3">
    <location>
        <position position="555"/>
    </location>
</feature>
<feature type="glycosylation site" description="N-linked (GlcNAc...) asparagine; by host" evidence="3">
    <location>
        <position position="586"/>
    </location>
</feature>
<feature type="disulfide bond" evidence="3">
    <location>
        <begin position="94"/>
        <end position="551"/>
    </location>
</feature>
<feature type="disulfide bond" evidence="3">
    <location>
        <begin position="111"/>
        <end position="507"/>
    </location>
</feature>
<feature type="disulfide bond" evidence="3">
    <location>
        <begin position="185"/>
        <end position="250"/>
    </location>
</feature>
<feature type="disulfide bond" evidence="3">
    <location>
        <begin position="344"/>
        <end position="391"/>
    </location>
</feature>
<feature type="disulfide bond" evidence="3">
    <location>
        <begin position="574"/>
        <end position="611"/>
    </location>
</feature>
<gene>
    <name evidence="3" type="primary">gB</name>
    <name type="ORF">UL55</name>
</gene>
<organism>
    <name type="scientific">Human cytomegalovirus (strain Merlin)</name>
    <name type="common">HHV-5</name>
    <name type="synonym">Human herpesvirus 5</name>
    <dbReference type="NCBI Taxonomy" id="295027"/>
    <lineage>
        <taxon>Viruses</taxon>
        <taxon>Duplodnaviria</taxon>
        <taxon>Heunggongvirae</taxon>
        <taxon>Peploviricota</taxon>
        <taxon>Herviviricetes</taxon>
        <taxon>Herpesvirales</taxon>
        <taxon>Orthoherpesviridae</taxon>
        <taxon>Betaherpesvirinae</taxon>
        <taxon>Cytomegalovirus</taxon>
        <taxon>Cytomegalovirus humanbeta5</taxon>
        <taxon>Human cytomegalovirus</taxon>
    </lineage>
</organism>
<dbReference type="EMBL" id="AY446894">
    <property type="protein sequence ID" value="AAR31620.1"/>
    <property type="molecule type" value="Genomic_DNA"/>
</dbReference>
<dbReference type="RefSeq" id="YP_081514.1">
    <property type="nucleotide sequence ID" value="NC_006273.2"/>
</dbReference>
<dbReference type="SMR" id="F5HB53"/>
<dbReference type="BioGRID" id="1677978">
    <property type="interactions" value="2"/>
</dbReference>
<dbReference type="TCDB" id="1.G.22.1.1">
    <property type="family name" value="the cytomegalovirus (human herpesvirus 5) glycoprotein go (go) family"/>
</dbReference>
<dbReference type="GlyCosmos" id="F5HB53">
    <property type="glycosylation" value="18 sites, No reported glycans"/>
</dbReference>
<dbReference type="DNASU" id="3077424"/>
<dbReference type="GeneID" id="3077424"/>
<dbReference type="KEGG" id="vg:3077424"/>
<dbReference type="Reactome" id="R-HSA-9609690">
    <property type="pathway name" value="HCMV Early Events"/>
</dbReference>
<dbReference type="Reactome" id="R-HSA-9610379">
    <property type="pathway name" value="HCMV Late Events"/>
</dbReference>
<dbReference type="Proteomes" id="UP000000938">
    <property type="component" value="Segment"/>
</dbReference>
<dbReference type="GO" id="GO:0044175">
    <property type="term" value="C:host cell endosome membrane"/>
    <property type="evidence" value="ECO:0007669"/>
    <property type="project" value="UniProtKB-SubCell"/>
</dbReference>
<dbReference type="GO" id="GO:0044178">
    <property type="term" value="C:host cell Golgi membrane"/>
    <property type="evidence" value="ECO:0007669"/>
    <property type="project" value="UniProtKB-SubCell"/>
</dbReference>
<dbReference type="GO" id="GO:0020002">
    <property type="term" value="C:host cell plasma membrane"/>
    <property type="evidence" value="ECO:0007669"/>
    <property type="project" value="UniProtKB-SubCell"/>
</dbReference>
<dbReference type="GO" id="GO:0005886">
    <property type="term" value="C:plasma membrane"/>
    <property type="evidence" value="ECO:0000304"/>
    <property type="project" value="Reactome"/>
</dbReference>
<dbReference type="GO" id="GO:0019031">
    <property type="term" value="C:viral envelope"/>
    <property type="evidence" value="ECO:0000304"/>
    <property type="project" value="Reactome"/>
</dbReference>
<dbReference type="GO" id="GO:0055036">
    <property type="term" value="C:virion membrane"/>
    <property type="evidence" value="ECO:0007669"/>
    <property type="project" value="UniProtKB-SubCell"/>
</dbReference>
<dbReference type="GO" id="GO:0046718">
    <property type="term" value="P:symbiont entry into host cell"/>
    <property type="evidence" value="ECO:0007669"/>
    <property type="project" value="UniProtKB-KW"/>
</dbReference>
<dbReference type="GO" id="GO:0019062">
    <property type="term" value="P:virion attachment to host cell"/>
    <property type="evidence" value="ECO:0007669"/>
    <property type="project" value="UniProtKB-KW"/>
</dbReference>
<dbReference type="Gene3D" id="1.20.5.1890">
    <property type="match status" value="1"/>
</dbReference>
<dbReference type="Gene3D" id="2.30.29.100">
    <property type="match status" value="2"/>
</dbReference>
<dbReference type="Gene3D" id="2.30.30.1230">
    <property type="match status" value="1"/>
</dbReference>
<dbReference type="Gene3D" id="6.10.250.3280">
    <property type="match status" value="1"/>
</dbReference>
<dbReference type="HAMAP" id="MF_04032">
    <property type="entry name" value="HSV_GB"/>
    <property type="match status" value="1"/>
</dbReference>
<dbReference type="InterPro" id="IPR021044">
    <property type="entry name" value="Glycoprot_B_antigenic_N"/>
</dbReference>
<dbReference type="InterPro" id="IPR035377">
    <property type="entry name" value="Glycoprot_B_PH1"/>
</dbReference>
<dbReference type="InterPro" id="IPR035381">
    <property type="entry name" value="Glycoprot_B_PH2"/>
</dbReference>
<dbReference type="InterPro" id="IPR038631">
    <property type="entry name" value="Glycoprot_B_PH2_sf"/>
</dbReference>
<dbReference type="InterPro" id="IPR055341">
    <property type="entry name" value="Glycoprotein_B_ecto_C"/>
</dbReference>
<dbReference type="InterPro" id="IPR000234">
    <property type="entry name" value="Herpes_Glycoprot_B"/>
</dbReference>
<dbReference type="Pfam" id="PF17416">
    <property type="entry name" value="Glycoprot_B_PH1"/>
    <property type="match status" value="1"/>
</dbReference>
<dbReference type="Pfam" id="PF17417">
    <property type="entry name" value="Glycoprot_B_PH2"/>
    <property type="match status" value="1"/>
</dbReference>
<dbReference type="Pfam" id="PF00606">
    <property type="entry name" value="Glycoprotein_B"/>
    <property type="match status" value="1"/>
</dbReference>
<dbReference type="Pfam" id="PF12154">
    <property type="entry name" value="HCMVantigenic_N"/>
    <property type="match status" value="1"/>
</dbReference>
<dbReference type="SUPFAM" id="SSF161008">
    <property type="entry name" value="Viral glycoprotein ectodomain-like"/>
    <property type="match status" value="1"/>
</dbReference>
<proteinExistence type="inferred from homology"/>
<comment type="function">
    <text evidence="3">Envelope glycoprotein that forms spikes at the surface of virion envelope. Essential for the initial attachment to heparan sulfate moieties of the host cell surface proteoglycans. Involved in fusion of viral and cellular membranes leading to virus entry into the host cell. Following initial binding to its host receptors, membrane fusion is mediated by the fusion machinery composed at least of gB and the heterodimer gH/gL. May be involved in the fusion between the virion envelope and the outer nuclear membrane during virion egress.</text>
</comment>
<comment type="subunit">
    <text evidence="3">Homotrimer; disulfide-linked. Binds to heparan sulfate proteoglycans. Interacts with gH/gL heterodimer.</text>
</comment>
<comment type="subcellular location">
    <subcellularLocation>
        <location evidence="3">Virion membrane</location>
        <topology evidence="3">Single-pass type I membrane protein</topology>
    </subcellularLocation>
    <subcellularLocation>
        <location evidence="3">Host cell membrane</location>
        <topology evidence="3">Single-pass type I membrane protein</topology>
    </subcellularLocation>
    <subcellularLocation>
        <location evidence="3">Host endosome membrane</location>
        <topology evidence="3">Single-pass type I membrane protein</topology>
    </subcellularLocation>
    <subcellularLocation>
        <location evidence="3">Host Golgi apparatus membrane</location>
        <topology evidence="3">Single-pass type I membrane protein</topology>
    </subcellularLocation>
    <text evidence="3">During virion morphogenesis, this protein probably accumulates in the endosomes and trans-Golgi where secondary envelopment occurs. It is probably transported to the cell surface from where it is endocytosed and directed to the trans-Golgi network (TGN).</text>
</comment>
<comment type="PTM">
    <text evidence="1">A proteolytic cleavage by host furin generates two subunits that remain linked by disulfide bonds.</text>
</comment>
<comment type="similarity">
    <text evidence="3">Belongs to the herpesviridae glycoprotein B family.</text>
</comment>
<evidence type="ECO:0000250" key="1"/>
<evidence type="ECO:0000255" key="2"/>
<evidence type="ECO:0000255" key="3">
    <source>
        <dbReference type="HAMAP-Rule" id="MF_04032"/>
    </source>
</evidence>
<evidence type="ECO:0000256" key="4">
    <source>
        <dbReference type="SAM" id="MobiDB-lite"/>
    </source>
</evidence>
<organismHost>
    <name type="scientific">Homo sapiens</name>
    <name type="common">Human</name>
    <dbReference type="NCBI Taxonomy" id="9606"/>
</organismHost>
<keyword id="KW-1015">Disulfide bond</keyword>
<keyword id="KW-0325">Glycoprotein</keyword>
<keyword id="KW-1032">Host cell membrane</keyword>
<keyword id="KW-1039">Host endosome</keyword>
<keyword id="KW-1040">Host Golgi apparatus</keyword>
<keyword id="KW-1043">Host membrane</keyword>
<keyword id="KW-0945">Host-virus interaction</keyword>
<keyword id="KW-0472">Membrane</keyword>
<keyword id="KW-1185">Reference proteome</keyword>
<keyword id="KW-0732">Signal</keyword>
<keyword id="KW-0812">Transmembrane</keyword>
<keyword id="KW-1133">Transmembrane helix</keyword>
<keyword id="KW-1161">Viral attachment to host cell</keyword>
<keyword id="KW-0261">Viral envelope protein</keyword>
<keyword id="KW-0946">Virion</keyword>
<keyword id="KW-1160">Virus entry into host cell</keyword>
<name>GB_HCMVM</name>
<protein>
    <recommendedName>
        <fullName evidence="3">Envelope glycoprotein B</fullName>
        <shortName evidence="3">gB</shortName>
    </recommendedName>
</protein>
<sequence>MESRIWCLVVCVNLCIVCLGAAVSSSSTRGTSATHSHHSSHTTSAAHSRSGSVSQRVTSSQTVSHGVNETIYNTTLKYGDVVGVNTTKYPYRVCSMAQGTDLIRFERNIVCTSMKPINEDLDEGIMVVYKRNIVAHTFKVRVYQKVLTFRRSYAYIHTTYLLGSNTEYVAPPMWEIHHINSHSQCYSSYSRVIAGTVFVAYHRDSYENKTMQLMPDDYSNTHSTRYVTVKDQWHSRGSTWLYRETCNLNCMVTITTARSKYPYHFFATSTGDVVDISPFYNGTNRNASYFGENADKFFIFPNYTIVSDFGRPNSALETHRLVAFLERADSVISWDIQDEKNVTCQLTFWEASERTIRSEAEDSYHFSSAKMTATFLSKKQEVNMSDSALDCVRDEAINKLQQIFNTSYNQTYEKYGNVSVFETTGGLVVFWQGIKQKSLVELERLANRSSLNLTHNRTKRSTDGNNATHLSNMESVHNLVYAQLQFTYDTLRGYINRALAQIAEAWCVDQRRTLEVFKELSKINPSAILSAIYNKPIAARFMGDVLGLASCVTINQTSVKVLRDMNVKESPGRCYSRPVVIFNFANSSYVQYGQLGEDNEILLGNHRTEECQLPSLKIFIAGNSAYEYVDYLFKRMIDLSSISTVDSMIALDIDPLENTDFRVLELYSQKELRSSNVFDLEEIMREFNSYKQRVKYVEDKVVDPLPPYLKGLDDLMSGLGAAGKAVGVAIGAVGGAVASVVEGVATFLKNPFGAFTIILVAIAVVIITYLIYTRQRRLCTQPLQNLFPYLVSADGTTVTSGSTKDTSLQAPPSYEESVYNSGRKGPGPPSSDASTAAPPYTNEQAYQMLLALARLDAEQRAQQNGTDSLDGRTGTQDKGQKPNLLDRLRHRKNGYRHLKDSDEEENV</sequence>
<accession>F5HB53</accession>
<reference key="1">
    <citation type="journal article" date="2004" name="J. Gen. Virol.">
        <title>Genetic content of wild-type human cytomegalovirus.</title>
        <authorList>
            <person name="Dolan A."/>
            <person name="Cunningham C."/>
            <person name="Hector R.D."/>
            <person name="Hassan-Walker A.F."/>
            <person name="Lee L."/>
            <person name="Addison C."/>
            <person name="Dargan D.J."/>
            <person name="McGeoch D.J."/>
            <person name="Gatherer D."/>
            <person name="Emery V.C."/>
            <person name="Griffiths P.D."/>
            <person name="Sinzger C."/>
            <person name="McSharry B.P."/>
            <person name="Wilkinson G.W.G."/>
            <person name="Davison A.J."/>
        </authorList>
    </citation>
    <scope>NUCLEOTIDE SEQUENCE [LARGE SCALE GENOMIC DNA]</scope>
    <source>
        <strain>Merlin</strain>
    </source>
</reference>